<reference evidence="8" key="1">
    <citation type="journal article" date="1998" name="Science">
        <title>Genome sequence of the nematode C. elegans: a platform for investigating biology.</title>
        <authorList>
            <consortium name="The C. elegans sequencing consortium"/>
        </authorList>
    </citation>
    <scope>NUCLEOTIDE SEQUENCE [LARGE SCALE GENOMIC DNA]</scope>
    <source>
        <strain evidence="8">Bristol N2</strain>
    </source>
</reference>
<reference key="2">
    <citation type="journal article" date="2013" name="Mol. Biol. Cell">
        <title>akirin is required for diakinesis bivalent structure and synaptonemal complex disassembly at meiotic prophase I.</title>
        <authorList>
            <person name="Clemons A.M."/>
            <person name="Brockway H.M."/>
            <person name="Yin Y."/>
            <person name="Kasinathan B."/>
            <person name="Butterfield Y.S."/>
            <person name="Jones S.J."/>
            <person name="Colaiacovo M.P."/>
            <person name="Smolikove S."/>
        </authorList>
    </citation>
    <scope>FUNCTION</scope>
    <scope>DISRUPTION PHENOTYPE</scope>
    <scope>MUTAGENESIS OF HIS-190</scope>
</reference>
<reference key="3">
    <citation type="journal article" date="2018" name="PLoS Genet.">
        <title>Evolutionary plasticity in the innate immune function of Akirin.</title>
        <authorList>
            <person name="Polanowska J."/>
            <person name="Chen J.X."/>
            <person name="Soule J."/>
            <person name="Omi S."/>
            <person name="Belougne J."/>
            <person name="Taffoni C."/>
            <person name="Pujol N."/>
            <person name="Selbach M."/>
            <person name="Zugasti O."/>
            <person name="Ewbank J.J."/>
        </authorList>
    </citation>
    <scope>FUNCTION</scope>
    <scope>INTERACTION WITH CEH-18; HDA-1 AND LET-418</scope>
    <scope>SUBCELLULAR LOCATION</scope>
    <scope>TISSUE SPECIFICITY</scope>
    <scope>DEVELOPMENTAL STAGE</scope>
    <scope>DISRUPTION PHENOTYPE</scope>
</reference>
<reference key="4">
    <citation type="journal article" date="2019" name="Genetics">
        <title>A novel role for alpha-importins and Akirin in establishment of meiotic sister chromatid cohesion in Caenorhabditis elegans.</title>
        <authorList>
            <person name="Bowman R."/>
            <person name="Balukof N."/>
            <person name="Ford T."/>
            <person name="Smolikove S."/>
        </authorList>
    </citation>
    <scope>FUNCTION</scope>
    <scope>SUBCELLULAR LOCATION</scope>
    <scope>DISRUPTION PHENOTYPE</scope>
    <scope>INTERACTION WITH IMA-2</scope>
</reference>
<reference key="5">
    <citation type="journal article" date="2020" name="G3 (Bethesda)">
        <title>Akirin is required for muscle function and acts through the TGF-beta Sma/Mab signaling pathway in Caenorhabditis elegans development.</title>
        <authorList>
            <person name="Bowman R."/>
            <person name="Balukoff N."/>
            <person name="Clemons A."/>
            <person name="Koury E."/>
            <person name="Ford T."/>
            <person name="Baxi K."/>
            <person name="Egydio de Carvalho C."/>
            <person name="Smolikove S."/>
        </authorList>
    </citation>
    <scope>FUNCTION</scope>
    <scope>SUBCELLULAR LOCATION</scope>
    <scope>DISRUPTION PHENOTYPE</scope>
    <scope>TISSUE SPECIFICITY</scope>
</reference>
<feature type="chain" id="PRO_0000447630" description="Akirin">
    <location>
        <begin position="1"/>
        <end position="218"/>
    </location>
</feature>
<feature type="region of interest" description="Disordered" evidence="1">
    <location>
        <begin position="96"/>
        <end position="150"/>
    </location>
</feature>
<feature type="compositionally biased region" description="Polar residues" evidence="1">
    <location>
        <begin position="128"/>
        <end position="147"/>
    </location>
</feature>
<feature type="mutagenesis site" description="In rj1; 21% embryonic lethality, reduced egg laying and a 0.6% increase in the number of male progeny. Delayed progression of meiosis, which most likely results from defective disassembly of synaptonemal complex proteins, and defective chromosome alignment, segregation and condensation." evidence="2">
    <original>H</original>
    <variation>P</variation>
    <location>
        <position position="190"/>
    </location>
</feature>
<accession>Q966L3</accession>
<gene>
    <name evidence="6 9" type="primary">akir-1</name>
    <name evidence="9" type="ORF">E01A2.6</name>
</gene>
<organism evidence="8">
    <name type="scientific">Caenorhabditis elegans</name>
    <dbReference type="NCBI Taxonomy" id="6239"/>
    <lineage>
        <taxon>Eukaryota</taxon>
        <taxon>Metazoa</taxon>
        <taxon>Ecdysozoa</taxon>
        <taxon>Nematoda</taxon>
        <taxon>Chromadorea</taxon>
        <taxon>Rhabditida</taxon>
        <taxon>Rhabditina</taxon>
        <taxon>Rhabditomorpha</taxon>
        <taxon>Rhabditoidea</taxon>
        <taxon>Rhabditidae</taxon>
        <taxon>Peloderinae</taxon>
        <taxon>Caenorhabditis</taxon>
    </lineage>
</organism>
<dbReference type="EMBL" id="BX284601">
    <property type="protein sequence ID" value="CCD68578.1"/>
    <property type="molecule type" value="Genomic_DNA"/>
</dbReference>
<dbReference type="RefSeq" id="NP_491304.1">
    <property type="nucleotide sequence ID" value="NM_058903.9"/>
</dbReference>
<dbReference type="SMR" id="Q966L3"/>
<dbReference type="FunCoup" id="Q966L3">
    <property type="interactions" value="3319"/>
</dbReference>
<dbReference type="STRING" id="6239.E01A2.6.2"/>
<dbReference type="PaxDb" id="6239-E01A2.6.1"/>
<dbReference type="EnsemblMetazoa" id="E01A2.6.1">
    <property type="protein sequence ID" value="E01A2.6.1"/>
    <property type="gene ID" value="WBGene00017088"/>
</dbReference>
<dbReference type="GeneID" id="171997"/>
<dbReference type="KEGG" id="cel:CELE_E01A2.6"/>
<dbReference type="UCSC" id="E01A2.6">
    <property type="organism name" value="c. elegans"/>
</dbReference>
<dbReference type="AGR" id="WB:WBGene00017088"/>
<dbReference type="CTD" id="171997"/>
<dbReference type="WormBase" id="E01A2.6">
    <property type="protein sequence ID" value="CE24873"/>
    <property type="gene ID" value="WBGene00017088"/>
    <property type="gene designation" value="akir-1"/>
</dbReference>
<dbReference type="eggNOG" id="KOG4330">
    <property type="taxonomic scope" value="Eukaryota"/>
</dbReference>
<dbReference type="GeneTree" id="ENSGT00940000174557"/>
<dbReference type="HOGENOM" id="CLU_1125694_0_0_1"/>
<dbReference type="InParanoid" id="Q966L3"/>
<dbReference type="OMA" id="QADGCCP"/>
<dbReference type="OrthoDB" id="10039914at2759"/>
<dbReference type="PhylomeDB" id="Q966L3"/>
<dbReference type="PRO" id="PR:Q966L3"/>
<dbReference type="Proteomes" id="UP000001940">
    <property type="component" value="Chromosome I"/>
</dbReference>
<dbReference type="Bgee" id="WBGene00017088">
    <property type="expression patterns" value="Expressed in pharyngeal muscle cell (C elegans) and 4 other cell types or tissues"/>
</dbReference>
<dbReference type="GO" id="GO:0000785">
    <property type="term" value="C:chromatin"/>
    <property type="evidence" value="ECO:0000318"/>
    <property type="project" value="GO_Central"/>
</dbReference>
<dbReference type="GO" id="GO:0005634">
    <property type="term" value="C:nucleus"/>
    <property type="evidence" value="ECO:0000314"/>
    <property type="project" value="UniProtKB"/>
</dbReference>
<dbReference type="GO" id="GO:0003677">
    <property type="term" value="F:DNA binding"/>
    <property type="evidence" value="ECO:0007669"/>
    <property type="project" value="UniProtKB-KW"/>
</dbReference>
<dbReference type="GO" id="GO:0003712">
    <property type="term" value="F:transcription coregulator activity"/>
    <property type="evidence" value="ECO:0000318"/>
    <property type="project" value="GO_Central"/>
</dbReference>
<dbReference type="GO" id="GO:0045087">
    <property type="term" value="P:innate immune response"/>
    <property type="evidence" value="ECO:0007669"/>
    <property type="project" value="UniProtKB-KW"/>
</dbReference>
<dbReference type="GO" id="GO:0051321">
    <property type="term" value="P:meiotic cell cycle"/>
    <property type="evidence" value="ECO:0007669"/>
    <property type="project" value="UniProtKB-KW"/>
</dbReference>
<dbReference type="GO" id="GO:0051177">
    <property type="term" value="P:meiotic sister chromatid cohesion"/>
    <property type="evidence" value="ECO:0000315"/>
    <property type="project" value="UniProtKB"/>
</dbReference>
<dbReference type="GO" id="GO:0045089">
    <property type="term" value="P:positive regulation of innate immune response"/>
    <property type="evidence" value="ECO:0000318"/>
    <property type="project" value="GO_Central"/>
</dbReference>
<dbReference type="GO" id="GO:0045944">
    <property type="term" value="P:positive regulation of transcription by RNA polymerase II"/>
    <property type="evidence" value="ECO:0000318"/>
    <property type="project" value="GO_Central"/>
</dbReference>
<dbReference type="GO" id="GO:0006606">
    <property type="term" value="P:protein import into nucleus"/>
    <property type="evidence" value="ECO:0000315"/>
    <property type="project" value="UniProtKB"/>
</dbReference>
<dbReference type="InterPro" id="IPR024132">
    <property type="entry name" value="Akirin"/>
</dbReference>
<dbReference type="PANTHER" id="PTHR13293">
    <property type="entry name" value="AKIRIN-RELATED"/>
    <property type="match status" value="1"/>
</dbReference>
<dbReference type="PANTHER" id="PTHR13293:SF6">
    <property type="entry name" value="AKIRIN-RELATED"/>
    <property type="match status" value="1"/>
</dbReference>
<sequence>MACGLALKRPLQHEYESFLTDETYNGEAKRARTQCPPFRAQMGTIAATLPSTSTFAQKFKEQEESVFQAATLMTRLSRNQLKTYLSSEVKNLRKRKAIPRSNDFDDDGDQRGDGCSSNYSKAYRAPSSPKSGSDSEGEAPSTSVTDRSSAKREFTMANVQMICERLLKQQEIRLRNEFEMVLTKKLDEQHQQYVQFAAEQLNSKCVSTGDDYSYSYLS</sequence>
<comment type="function">
    <text evidence="2 3 4 5">Molecular adapter that acts as a bridge between a variety of multiprotein complexes, and which is involved in antifungal innate immunity, development of the muscle and sister chromatid cohesion (PubMed:23363597, PubMed:30036395, PubMed:30563860, PubMed:31767636). Plays a role in antifungal innate immunity by acting as a bridge between components of the NuRD (Nucleosome Remodeling and Deacetylase) and MEC chromatin remodeling complexes (PubMed:30036395). NuRD and MEC complexes bind to the promoters of antimicrobial peptide genes and may recruit other proteins such as ceh-18 to control gene expression in response to fungal infection (PubMed:30036395). During meiotic prophase I, plays a role in the disassembly of synaptonemal complex proteins and in the regulation of chromosome condensation and segregation (PubMed:23363597). Together with nuclear import receptor ima-2, required for the import and load of cohesin complex proteins in meiotic nuclei, possibly by acting as a bridge between ima-2 and cohesins (PubMed:30563860). Required for embryonic development of muscle tissue (PubMed:31767636).</text>
</comment>
<comment type="subunit">
    <text evidence="3 4">Interacts with hda-1, a component of the NuRD complex (PubMed:30036395). Interacts with let-418, a component of the NuRD and MEC complexes (PubMed:30036395). Interacts with the transcription factor ceh-18 (PubMed:30036395). Interacts with ima-2 (PubMed:30563860).</text>
</comment>
<comment type="subcellular location">
    <subcellularLocation>
        <location evidence="3 4 5">Nucleus</location>
    </subcellularLocation>
</comment>
<comment type="tissue specificity">
    <text evidence="3 5">Localizes to somatic tissues throughout the body, including muscle cells (PubMed:31767636). Expressed in lateral epithelial seam cells, the hyp7 epidermal syncytium, and multiple head and tail neurons (PubMed:30036395).</text>
</comment>
<comment type="developmental stage">
    <text evidence="3">Expressed from the late embryo stage onwards, with high expression at the late L4 stage of larval development.</text>
</comment>
<comment type="disruption phenotype">
    <text evidence="2 3 4 5">16% embryonic lethality, reduced egg laying and a 0.9% increase in the number of male progeny (PubMed:23363597). Delayed progression of meiosis, which most likely results from defective disassembly of synaptonemal complex proteins, and defective chromosome structure, alignment and condensation (PubMed:23363597). RNAi-mediated knockdown results in reduced expression of the nlp-29 antimicrobial peptide following fungal infection by D.coniospora (PubMed:30036395). Worms show reduced body size and muscle function (PubMed:31767636). Worms lacking both akir-1 and ima-2 show reduced gonad size and aberrant diakinesis oocyte formation; defects are caused by impaired meiotic recombination (PubMed:30563860).</text>
</comment>
<comment type="similarity">
    <text evidence="7">Belongs to the akirin family.</text>
</comment>
<proteinExistence type="evidence at protein level"/>
<evidence type="ECO:0000256" key="1">
    <source>
        <dbReference type="SAM" id="MobiDB-lite"/>
    </source>
</evidence>
<evidence type="ECO:0000269" key="2">
    <source>
    </source>
</evidence>
<evidence type="ECO:0000269" key="3">
    <source>
    </source>
</evidence>
<evidence type="ECO:0000269" key="4">
    <source>
    </source>
</evidence>
<evidence type="ECO:0000269" key="5">
    <source>
    </source>
</evidence>
<evidence type="ECO:0000303" key="6">
    <source>
    </source>
</evidence>
<evidence type="ECO:0000305" key="7"/>
<evidence type="ECO:0000312" key="8">
    <source>
        <dbReference type="Proteomes" id="UP000001940"/>
    </source>
</evidence>
<evidence type="ECO:0000312" key="9">
    <source>
        <dbReference type="WormBase" id="E01A2.6"/>
    </source>
</evidence>
<protein>
    <recommendedName>
        <fullName evidence="7">Akirin</fullName>
    </recommendedName>
</protein>
<keyword id="KW-0238">DNA-binding</keyword>
<keyword id="KW-0391">Immunity</keyword>
<keyword id="KW-0399">Innate immunity</keyword>
<keyword id="KW-0469">Meiosis</keyword>
<keyword id="KW-0539">Nucleus</keyword>
<keyword id="KW-1185">Reference proteome</keyword>
<keyword id="KW-0804">Transcription</keyword>
<keyword id="KW-0805">Transcription regulation</keyword>
<name>AKIRN_CAEEL</name>